<proteinExistence type="inferred from homology"/>
<gene>
    <name evidence="1" type="primary">glnD</name>
    <name type="ordered locus">BB2603</name>
</gene>
<organism>
    <name type="scientific">Bordetella bronchiseptica (strain ATCC BAA-588 / NCTC 13252 / RB50)</name>
    <name type="common">Alcaligenes bronchisepticus</name>
    <dbReference type="NCBI Taxonomy" id="257310"/>
    <lineage>
        <taxon>Bacteria</taxon>
        <taxon>Pseudomonadati</taxon>
        <taxon>Pseudomonadota</taxon>
        <taxon>Betaproteobacteria</taxon>
        <taxon>Burkholderiales</taxon>
        <taxon>Alcaligenaceae</taxon>
        <taxon>Bordetella</taxon>
    </lineage>
</organism>
<reference key="1">
    <citation type="journal article" date="2003" name="Nat. Genet.">
        <title>Comparative analysis of the genome sequences of Bordetella pertussis, Bordetella parapertussis and Bordetella bronchiseptica.</title>
        <authorList>
            <person name="Parkhill J."/>
            <person name="Sebaihia M."/>
            <person name="Preston A."/>
            <person name="Murphy L.D."/>
            <person name="Thomson N.R."/>
            <person name="Harris D.E."/>
            <person name="Holden M.T.G."/>
            <person name="Churcher C.M."/>
            <person name="Bentley S.D."/>
            <person name="Mungall K.L."/>
            <person name="Cerdeno-Tarraga A.-M."/>
            <person name="Temple L."/>
            <person name="James K.D."/>
            <person name="Harris B."/>
            <person name="Quail M.A."/>
            <person name="Achtman M."/>
            <person name="Atkin R."/>
            <person name="Baker S."/>
            <person name="Basham D."/>
            <person name="Bason N."/>
            <person name="Cherevach I."/>
            <person name="Chillingworth T."/>
            <person name="Collins M."/>
            <person name="Cronin A."/>
            <person name="Davis P."/>
            <person name="Doggett J."/>
            <person name="Feltwell T."/>
            <person name="Goble A."/>
            <person name="Hamlin N."/>
            <person name="Hauser H."/>
            <person name="Holroyd S."/>
            <person name="Jagels K."/>
            <person name="Leather S."/>
            <person name="Moule S."/>
            <person name="Norberczak H."/>
            <person name="O'Neil S."/>
            <person name="Ormond D."/>
            <person name="Price C."/>
            <person name="Rabbinowitsch E."/>
            <person name="Rutter S."/>
            <person name="Sanders M."/>
            <person name="Saunders D."/>
            <person name="Seeger K."/>
            <person name="Sharp S."/>
            <person name="Simmonds M."/>
            <person name="Skelton J."/>
            <person name="Squares R."/>
            <person name="Squares S."/>
            <person name="Stevens K."/>
            <person name="Unwin L."/>
            <person name="Whitehead S."/>
            <person name="Barrell B.G."/>
            <person name="Maskell D.J."/>
        </authorList>
    </citation>
    <scope>NUCLEOTIDE SEQUENCE [LARGE SCALE GENOMIC DNA]</scope>
    <source>
        <strain>ATCC BAA-588 / NCTC 13252 / RB50</strain>
    </source>
</reference>
<dbReference type="EC" id="2.7.7.59" evidence="1"/>
<dbReference type="EC" id="3.1.4.-" evidence="1"/>
<dbReference type="EMBL" id="BX640444">
    <property type="protein sequence ID" value="CAE33096.1"/>
    <property type="molecule type" value="Genomic_DNA"/>
</dbReference>
<dbReference type="RefSeq" id="WP_003811808.1">
    <property type="nucleotide sequence ID" value="NC_002927.3"/>
</dbReference>
<dbReference type="SMR" id="Q7WJ96"/>
<dbReference type="KEGG" id="bbr:BB2603"/>
<dbReference type="eggNOG" id="COG2844">
    <property type="taxonomic scope" value="Bacteria"/>
</dbReference>
<dbReference type="HOGENOM" id="CLU_012833_1_0_4"/>
<dbReference type="Proteomes" id="UP000001027">
    <property type="component" value="Chromosome"/>
</dbReference>
<dbReference type="GO" id="GO:0008773">
    <property type="term" value="F:[protein-PII] uridylyltransferase activity"/>
    <property type="evidence" value="ECO:0007669"/>
    <property type="project" value="UniProtKB-UniRule"/>
</dbReference>
<dbReference type="GO" id="GO:0008081">
    <property type="term" value="F:phosphoric diester hydrolase activity"/>
    <property type="evidence" value="ECO:0007669"/>
    <property type="project" value="UniProtKB-UniRule"/>
</dbReference>
<dbReference type="GO" id="GO:0006808">
    <property type="term" value="P:regulation of nitrogen utilization"/>
    <property type="evidence" value="ECO:0007669"/>
    <property type="project" value="UniProtKB-UniRule"/>
</dbReference>
<dbReference type="CDD" id="cd04899">
    <property type="entry name" value="ACT_ACR-UUR-like_2"/>
    <property type="match status" value="1"/>
</dbReference>
<dbReference type="CDD" id="cd04900">
    <property type="entry name" value="ACT_UUR-like_1"/>
    <property type="match status" value="1"/>
</dbReference>
<dbReference type="CDD" id="cd00077">
    <property type="entry name" value="HDc"/>
    <property type="match status" value="1"/>
</dbReference>
<dbReference type="CDD" id="cd05401">
    <property type="entry name" value="NT_GlnE_GlnD_like"/>
    <property type="match status" value="1"/>
</dbReference>
<dbReference type="Gene3D" id="3.30.70.260">
    <property type="match status" value="1"/>
</dbReference>
<dbReference type="Gene3D" id="1.10.3210.10">
    <property type="entry name" value="Hypothetical protein af1432"/>
    <property type="match status" value="1"/>
</dbReference>
<dbReference type="HAMAP" id="MF_00277">
    <property type="entry name" value="PII_uridylyl_transf"/>
    <property type="match status" value="1"/>
</dbReference>
<dbReference type="InterPro" id="IPR045865">
    <property type="entry name" value="ACT-like_dom_sf"/>
</dbReference>
<dbReference type="InterPro" id="IPR002912">
    <property type="entry name" value="ACT_dom"/>
</dbReference>
<dbReference type="InterPro" id="IPR003607">
    <property type="entry name" value="HD/PDEase_dom"/>
</dbReference>
<dbReference type="InterPro" id="IPR006674">
    <property type="entry name" value="HD_domain"/>
</dbReference>
<dbReference type="InterPro" id="IPR043519">
    <property type="entry name" value="NT_sf"/>
</dbReference>
<dbReference type="InterPro" id="IPR013546">
    <property type="entry name" value="PII_UdlTrfase/GS_AdlTrfase"/>
</dbReference>
<dbReference type="InterPro" id="IPR002934">
    <property type="entry name" value="Polymerase_NTP_transf_dom"/>
</dbReference>
<dbReference type="InterPro" id="IPR010043">
    <property type="entry name" value="UTase/UR"/>
</dbReference>
<dbReference type="NCBIfam" id="NF002837">
    <property type="entry name" value="PRK03059.1"/>
    <property type="match status" value="1"/>
</dbReference>
<dbReference type="NCBIfam" id="TIGR01693">
    <property type="entry name" value="UTase_glnD"/>
    <property type="match status" value="1"/>
</dbReference>
<dbReference type="PANTHER" id="PTHR47320">
    <property type="entry name" value="BIFUNCTIONAL URIDYLYLTRANSFERASE/URIDYLYL-REMOVING ENZYME"/>
    <property type="match status" value="1"/>
</dbReference>
<dbReference type="PANTHER" id="PTHR47320:SF1">
    <property type="entry name" value="BIFUNCTIONAL URIDYLYLTRANSFERASE_URIDYLYL-REMOVING ENZYME"/>
    <property type="match status" value="1"/>
</dbReference>
<dbReference type="Pfam" id="PF01842">
    <property type="entry name" value="ACT"/>
    <property type="match status" value="1"/>
</dbReference>
<dbReference type="Pfam" id="PF08335">
    <property type="entry name" value="GlnD_UR_UTase"/>
    <property type="match status" value="1"/>
</dbReference>
<dbReference type="Pfam" id="PF01966">
    <property type="entry name" value="HD"/>
    <property type="match status" value="1"/>
</dbReference>
<dbReference type="Pfam" id="PF01909">
    <property type="entry name" value="NTP_transf_2"/>
    <property type="match status" value="1"/>
</dbReference>
<dbReference type="PIRSF" id="PIRSF006288">
    <property type="entry name" value="PII_uridyltransf"/>
    <property type="match status" value="1"/>
</dbReference>
<dbReference type="SMART" id="SM00471">
    <property type="entry name" value="HDc"/>
    <property type="match status" value="1"/>
</dbReference>
<dbReference type="SUPFAM" id="SSF55021">
    <property type="entry name" value="ACT-like"/>
    <property type="match status" value="2"/>
</dbReference>
<dbReference type="SUPFAM" id="SSF109604">
    <property type="entry name" value="HD-domain/PDEase-like"/>
    <property type="match status" value="1"/>
</dbReference>
<dbReference type="SUPFAM" id="SSF81301">
    <property type="entry name" value="Nucleotidyltransferase"/>
    <property type="match status" value="1"/>
</dbReference>
<dbReference type="SUPFAM" id="SSF81593">
    <property type="entry name" value="Nucleotidyltransferase substrate binding subunit/domain"/>
    <property type="match status" value="1"/>
</dbReference>
<dbReference type="PROSITE" id="PS51671">
    <property type="entry name" value="ACT"/>
    <property type="match status" value="2"/>
</dbReference>
<dbReference type="PROSITE" id="PS51831">
    <property type="entry name" value="HD"/>
    <property type="match status" value="1"/>
</dbReference>
<sequence length="865" mass="98483">MPHVDLNPLKQRMQAARAAAVAQFRQHPRPDMLLTELRRIVDQALRELVKLCPLPAGATLAAVGGYGRGELYPHSDVDLLILLPQPPSAADARAVEALVAALWDLGLEPGHSVRTLEDCEREARGDITVETALLESRWLAGSRTLMKRLDSAMQARLDAAVFFQAKRVEMQQRHARYQDTPYALEPNCKESPGGLRDLQVILWMARAAGFGHSWREVAQAGLLTSSEARDLRRAEQAFKRLRIELHLLTGRREDRVLFDLQPGLAAVYGIASTATRRASELLMQRYYWAARLVTQLNVILVQNIEERLFPRPDSDARLIDDDFRNLRERLDIVREDGFERNPTLLLRAFLVMQQHPELIGMSARTLRAIWHSRHRIDAQFRRNPVNRKLFLQILQQPRGIVHELRRMTMLNILPRYLPVFRRIVGQMQHDLFHVYTVDQHTLAVVRNLRRFTMPEHAQEYPLASQLIAGLDRHWLLYVAALFHDIAKGRGGDHSELGAREVRRFAQDHGLDPADAELVEFLVRHHLLMSAVAQKRDLSDPQVVRDFAAQVGDERRLAALYLLTVADIRGTSPRVWNAWKGKLLEDLFRLTLAALGGAHADAHTVLTERKDEAARLTRLAGLRDDAREAFWNQLDIAYFLRHDASEIAWHTRHLYYQVAPDEPVVRVRPTEHGEGLQVMVYTRDAPDLFVTTCGYFDAKSLSVQDARVHTTRHGWALDSFIVLAPEGFADLRAQATLVEHELAERLRDPHAARHAHAPRRLPHSHARRSRVFPVMPQAELSPDERSQSWRLSVTATDRPGLLYALARVFAEHGVDLIMAKIMTLGERVEDVFIVSGSALERPRSQMQFERAILDALAGDEPRQQAA</sequence>
<name>GLND_BORBR</name>
<keyword id="KW-0378">Hydrolase</keyword>
<keyword id="KW-0460">Magnesium</keyword>
<keyword id="KW-0511">Multifunctional enzyme</keyword>
<keyword id="KW-0548">Nucleotidyltransferase</keyword>
<keyword id="KW-0677">Repeat</keyword>
<keyword id="KW-0808">Transferase</keyword>
<accession>Q7WJ96</accession>
<evidence type="ECO:0000255" key="1">
    <source>
        <dbReference type="HAMAP-Rule" id="MF_00277"/>
    </source>
</evidence>
<evidence type="ECO:0000255" key="2">
    <source>
        <dbReference type="PROSITE-ProRule" id="PRU01175"/>
    </source>
</evidence>
<evidence type="ECO:0000256" key="3">
    <source>
        <dbReference type="SAM" id="MobiDB-lite"/>
    </source>
</evidence>
<protein>
    <recommendedName>
        <fullName evidence="1">Bifunctional uridylyltransferase/uridylyl-removing enzyme</fullName>
        <shortName evidence="1">UTase/UR</shortName>
    </recommendedName>
    <alternativeName>
        <fullName evidence="1">Bifunctional [protein-PII] modification enzyme</fullName>
    </alternativeName>
    <alternativeName>
        <fullName evidence="1">Bifunctional nitrogen sensor protein</fullName>
    </alternativeName>
    <domain>
        <recommendedName>
            <fullName evidence="1">[Protein-PII] uridylyltransferase</fullName>
            <shortName evidence="1">PII uridylyltransferase</shortName>
            <shortName evidence="1">UTase</shortName>
            <ecNumber evidence="1">2.7.7.59</ecNumber>
        </recommendedName>
    </domain>
    <domain>
        <recommendedName>
            <fullName evidence="1">[Protein-PII]-UMP uridylyl-removing enzyme</fullName>
            <shortName evidence="1">UR</shortName>
            <ecNumber evidence="1">3.1.4.-</ecNumber>
        </recommendedName>
    </domain>
</protein>
<feature type="chain" id="PRO_0000192718" description="Bifunctional uridylyltransferase/uridylyl-removing enzyme">
    <location>
        <begin position="1"/>
        <end position="865"/>
    </location>
</feature>
<feature type="domain" description="HD" evidence="2">
    <location>
        <begin position="437"/>
        <end position="559"/>
    </location>
</feature>
<feature type="domain" description="ACT 1" evidence="1">
    <location>
        <begin position="676"/>
        <end position="762"/>
    </location>
</feature>
<feature type="domain" description="ACT 2" evidence="1">
    <location>
        <begin position="789"/>
        <end position="865"/>
    </location>
</feature>
<feature type="region of interest" description="Uridylyltransferase">
    <location>
        <begin position="1"/>
        <end position="318"/>
    </location>
</feature>
<feature type="region of interest" description="Uridylyl-removing">
    <location>
        <begin position="319"/>
        <end position="675"/>
    </location>
</feature>
<feature type="region of interest" description="Disordered" evidence="3">
    <location>
        <begin position="747"/>
        <end position="767"/>
    </location>
</feature>
<feature type="compositionally biased region" description="Basic residues" evidence="3">
    <location>
        <begin position="751"/>
        <end position="767"/>
    </location>
</feature>
<comment type="function">
    <text evidence="1">Modifies, by uridylylation and deuridylylation, the PII regulatory proteins (GlnB and homologs), in response to the nitrogen status of the cell that GlnD senses through the glutamine level. Under low glutamine levels, catalyzes the conversion of the PII proteins and UTP to PII-UMP and PPi, while under higher glutamine levels, GlnD hydrolyzes PII-UMP to PII and UMP (deuridylylation). Thus, controls uridylylation state and activity of the PII proteins, and plays an important role in the regulation of nitrogen assimilation and metabolism.</text>
</comment>
<comment type="catalytic activity">
    <reaction evidence="1">
        <text>[protein-PII]-L-tyrosine + UTP = [protein-PII]-uridylyl-L-tyrosine + diphosphate</text>
        <dbReference type="Rhea" id="RHEA:13673"/>
        <dbReference type="Rhea" id="RHEA-COMP:12147"/>
        <dbReference type="Rhea" id="RHEA-COMP:12148"/>
        <dbReference type="ChEBI" id="CHEBI:33019"/>
        <dbReference type="ChEBI" id="CHEBI:46398"/>
        <dbReference type="ChEBI" id="CHEBI:46858"/>
        <dbReference type="ChEBI" id="CHEBI:90602"/>
        <dbReference type="EC" id="2.7.7.59"/>
    </reaction>
</comment>
<comment type="catalytic activity">
    <reaction evidence="1">
        <text>[protein-PII]-uridylyl-L-tyrosine + H2O = [protein-PII]-L-tyrosine + UMP + H(+)</text>
        <dbReference type="Rhea" id="RHEA:48600"/>
        <dbReference type="Rhea" id="RHEA-COMP:12147"/>
        <dbReference type="Rhea" id="RHEA-COMP:12148"/>
        <dbReference type="ChEBI" id="CHEBI:15377"/>
        <dbReference type="ChEBI" id="CHEBI:15378"/>
        <dbReference type="ChEBI" id="CHEBI:46858"/>
        <dbReference type="ChEBI" id="CHEBI:57865"/>
        <dbReference type="ChEBI" id="CHEBI:90602"/>
    </reaction>
</comment>
<comment type="cofactor">
    <cofactor evidence="1">
        <name>Mg(2+)</name>
        <dbReference type="ChEBI" id="CHEBI:18420"/>
    </cofactor>
</comment>
<comment type="activity regulation">
    <text evidence="1">Uridylyltransferase (UTase) activity is inhibited by glutamine, while glutamine activates uridylyl-removing (UR) activity.</text>
</comment>
<comment type="domain">
    <text evidence="1">Has four distinct domains: an N-terminal nucleotidyltransferase (NT) domain responsible for UTase activity, a central HD domain that encodes UR activity, and two C-terminal ACT domains that seem to have a role in glutamine sensing.</text>
</comment>
<comment type="similarity">
    <text evidence="1">Belongs to the GlnD family.</text>
</comment>